<feature type="chain" id="PRO_0000031796" description="Oligopeptide-binding protein OppA">
    <location>
        <begin position="1"/>
        <end position="124"/>
    </location>
</feature>
<feature type="non-terminal residue">
    <location>
        <position position="1"/>
    </location>
</feature>
<protein>
    <recommendedName>
        <fullName evidence="2">Oligopeptide-binding protein OppA</fullName>
    </recommendedName>
</protein>
<proteinExistence type="inferred from homology"/>
<gene>
    <name type="primary">oppA</name>
</gene>
<organism>
    <name type="scientific">Lactococcus lactis subsp. cremoris</name>
    <name type="common">Streptococcus cremoris</name>
    <dbReference type="NCBI Taxonomy" id="1359"/>
    <lineage>
        <taxon>Bacteria</taxon>
        <taxon>Bacillati</taxon>
        <taxon>Bacillota</taxon>
        <taxon>Bacilli</taxon>
        <taxon>Lactobacillales</taxon>
        <taxon>Streptococcaceae</taxon>
        <taxon>Lactococcus</taxon>
    </lineage>
</organism>
<sequence length="124" mass="13740">DHMTTPPGANDWDITDGSWSLASEPSQQDLFSASAPYNFGHFNDSEITKDLNDIDSAKSENPTYRKAAFVKYQEDMNKKAYVVPTNFSLSYTPVNKRVVGMTLDYGAMDTWSEIGVSSAKLATK</sequence>
<dbReference type="EMBL" id="L04938">
    <property type="protein sequence ID" value="AAA25203.1"/>
    <property type="molecule type" value="Genomic_DNA"/>
</dbReference>
<dbReference type="PIR" id="B47098">
    <property type="entry name" value="B47098"/>
</dbReference>
<dbReference type="SMR" id="P0C2B3"/>
<dbReference type="GO" id="GO:0005886">
    <property type="term" value="C:plasma membrane"/>
    <property type="evidence" value="ECO:0007669"/>
    <property type="project" value="UniProtKB-SubCell"/>
</dbReference>
<dbReference type="GO" id="GO:0015833">
    <property type="term" value="P:peptide transport"/>
    <property type="evidence" value="ECO:0007669"/>
    <property type="project" value="UniProtKB-KW"/>
</dbReference>
<dbReference type="GO" id="GO:0015031">
    <property type="term" value="P:protein transport"/>
    <property type="evidence" value="ECO:0007669"/>
    <property type="project" value="UniProtKB-KW"/>
</dbReference>
<dbReference type="Gene3D" id="3.10.105.10">
    <property type="entry name" value="Dipeptide-binding Protein, Domain 3"/>
    <property type="match status" value="1"/>
</dbReference>
<dbReference type="SUPFAM" id="SSF53850">
    <property type="entry name" value="Periplasmic binding protein-like II"/>
    <property type="match status" value="1"/>
</dbReference>
<keyword id="KW-1003">Cell membrane</keyword>
<keyword id="KW-0449">Lipoprotein</keyword>
<keyword id="KW-0472">Membrane</keyword>
<keyword id="KW-0571">Peptide transport</keyword>
<keyword id="KW-0653">Protein transport</keyword>
<keyword id="KW-0813">Transport</keyword>
<evidence type="ECO:0000250" key="1">
    <source>
        <dbReference type="UniProtKB" id="Q07741"/>
    </source>
</evidence>
<evidence type="ECO:0000305" key="2"/>
<comment type="function">
    <text evidence="1">Part of the ABC transporter complex OppABCDF involved in the uptake of oligopeptides.</text>
</comment>
<comment type="subunit">
    <text evidence="1">The complex is composed of two ATP-binding proteins (OppD and OppF), two transmembrane proteins (OppB and OppC) and a solute-binding protein (OppA).</text>
</comment>
<comment type="subcellular location">
    <subcellularLocation>
        <location evidence="2">Cell membrane</location>
        <topology evidence="2">Lipid-anchor</topology>
    </subcellularLocation>
</comment>
<comment type="similarity">
    <text evidence="2">Belongs to the bacterial solute-binding protein 5 family.</text>
</comment>
<name>OPPA_LACLC</name>
<reference key="1">
    <citation type="journal article" date="1993" name="J. Bacteriol.">
        <title>Cloning and sequencing of the gene for a lactococcal endopeptidase, an enzyme with sequence similarity to mammalian enkephalinase.</title>
        <authorList>
            <person name="Mierau I."/>
            <person name="Tan P.S.T."/>
            <person name="Haandrikman A.J."/>
            <person name="Kok J."/>
            <person name="Leenhouts K.J."/>
            <person name="Konings W.N."/>
            <person name="Venema G."/>
        </authorList>
    </citation>
    <scope>NUCLEOTIDE SEQUENCE [GENOMIC DNA]</scope>
    <source>
        <strain>P8-2-47</strain>
    </source>
</reference>
<accession>P0C2B3</accession>
<accession>Q09144</accession>